<reference key="1">
    <citation type="journal article" date="1998" name="Biochim. Biophys. Acta">
        <title>Sequences and expression of six new members of the tetraspanin/TM4SF family.</title>
        <authorList>
            <person name="Todd S.C."/>
            <person name="Doctor V.S."/>
            <person name="Levy S."/>
        </authorList>
    </citation>
    <scope>NUCLEOTIDE SEQUENCE [MRNA]</scope>
</reference>
<reference key="2">
    <citation type="submission" date="1998-05" db="EMBL/GenBank/DDBJ databases">
        <title>New tetraspans identified in the EST database.</title>
        <authorList>
            <person name="Rubinstein E."/>
            <person name="Serru V."/>
            <person name="Boucheix C."/>
        </authorList>
    </citation>
    <scope>NUCLEOTIDE SEQUENCE [MRNA]</scope>
</reference>
<reference key="3">
    <citation type="submission" date="1999-03" db="EMBL/GenBank/DDBJ databases">
        <title>The molecular characterization of four tetraspanins.</title>
        <authorList>
            <person name="Puls K.L."/>
            <person name="Ni J."/>
            <person name="Liu D."/>
            <person name="Morahan G."/>
            <person name="Wright M.D."/>
        </authorList>
    </citation>
    <scope>NUCLEOTIDE SEQUENCE [MRNA]</scope>
</reference>
<reference key="4">
    <citation type="journal article" date="2004" name="Nat. Genet.">
        <title>Complete sequencing and characterization of 21,243 full-length human cDNAs.</title>
        <authorList>
            <person name="Ota T."/>
            <person name="Suzuki Y."/>
            <person name="Nishikawa T."/>
            <person name="Otsuki T."/>
            <person name="Sugiyama T."/>
            <person name="Irie R."/>
            <person name="Wakamatsu A."/>
            <person name="Hayashi K."/>
            <person name="Sato H."/>
            <person name="Nagai K."/>
            <person name="Kimura K."/>
            <person name="Makita H."/>
            <person name="Sekine M."/>
            <person name="Obayashi M."/>
            <person name="Nishi T."/>
            <person name="Shibahara T."/>
            <person name="Tanaka T."/>
            <person name="Ishii S."/>
            <person name="Yamamoto J."/>
            <person name="Saito K."/>
            <person name="Kawai Y."/>
            <person name="Isono Y."/>
            <person name="Nakamura Y."/>
            <person name="Nagahari K."/>
            <person name="Murakami K."/>
            <person name="Yasuda T."/>
            <person name="Iwayanagi T."/>
            <person name="Wagatsuma M."/>
            <person name="Shiratori A."/>
            <person name="Sudo H."/>
            <person name="Hosoiri T."/>
            <person name="Kaku Y."/>
            <person name="Kodaira H."/>
            <person name="Kondo H."/>
            <person name="Sugawara M."/>
            <person name="Takahashi M."/>
            <person name="Kanda K."/>
            <person name="Yokoi T."/>
            <person name="Furuya T."/>
            <person name="Kikkawa E."/>
            <person name="Omura Y."/>
            <person name="Abe K."/>
            <person name="Kamihara K."/>
            <person name="Katsuta N."/>
            <person name="Sato K."/>
            <person name="Tanikawa M."/>
            <person name="Yamazaki M."/>
            <person name="Ninomiya K."/>
            <person name="Ishibashi T."/>
            <person name="Yamashita H."/>
            <person name="Murakawa K."/>
            <person name="Fujimori K."/>
            <person name="Tanai H."/>
            <person name="Kimata M."/>
            <person name="Watanabe M."/>
            <person name="Hiraoka S."/>
            <person name="Chiba Y."/>
            <person name="Ishida S."/>
            <person name="Ono Y."/>
            <person name="Takiguchi S."/>
            <person name="Watanabe S."/>
            <person name="Yosida M."/>
            <person name="Hotuta T."/>
            <person name="Kusano J."/>
            <person name="Kanehori K."/>
            <person name="Takahashi-Fujii A."/>
            <person name="Hara H."/>
            <person name="Tanase T.-O."/>
            <person name="Nomura Y."/>
            <person name="Togiya S."/>
            <person name="Komai F."/>
            <person name="Hara R."/>
            <person name="Takeuchi K."/>
            <person name="Arita M."/>
            <person name="Imose N."/>
            <person name="Musashino K."/>
            <person name="Yuuki H."/>
            <person name="Oshima A."/>
            <person name="Sasaki N."/>
            <person name="Aotsuka S."/>
            <person name="Yoshikawa Y."/>
            <person name="Matsunawa H."/>
            <person name="Ichihara T."/>
            <person name="Shiohata N."/>
            <person name="Sano S."/>
            <person name="Moriya S."/>
            <person name="Momiyama H."/>
            <person name="Satoh N."/>
            <person name="Takami S."/>
            <person name="Terashima Y."/>
            <person name="Suzuki O."/>
            <person name="Nakagawa S."/>
            <person name="Senoh A."/>
            <person name="Mizoguchi H."/>
            <person name="Goto Y."/>
            <person name="Shimizu F."/>
            <person name="Wakebe H."/>
            <person name="Hishigaki H."/>
            <person name="Watanabe T."/>
            <person name="Sugiyama A."/>
            <person name="Takemoto M."/>
            <person name="Kawakami B."/>
            <person name="Yamazaki M."/>
            <person name="Watanabe K."/>
            <person name="Kumagai A."/>
            <person name="Itakura S."/>
            <person name="Fukuzumi Y."/>
            <person name="Fujimori Y."/>
            <person name="Komiyama M."/>
            <person name="Tashiro H."/>
            <person name="Tanigami A."/>
            <person name="Fujiwara T."/>
            <person name="Ono T."/>
            <person name="Yamada K."/>
            <person name="Fujii Y."/>
            <person name="Ozaki K."/>
            <person name="Hirao M."/>
            <person name="Ohmori Y."/>
            <person name="Kawabata A."/>
            <person name="Hikiji T."/>
            <person name="Kobatake N."/>
            <person name="Inagaki H."/>
            <person name="Ikema Y."/>
            <person name="Okamoto S."/>
            <person name="Okitani R."/>
            <person name="Kawakami T."/>
            <person name="Noguchi S."/>
            <person name="Itoh T."/>
            <person name="Shigeta K."/>
            <person name="Senba T."/>
            <person name="Matsumura K."/>
            <person name="Nakajima Y."/>
            <person name="Mizuno T."/>
            <person name="Morinaga M."/>
            <person name="Sasaki M."/>
            <person name="Togashi T."/>
            <person name="Oyama M."/>
            <person name="Hata H."/>
            <person name="Watanabe M."/>
            <person name="Komatsu T."/>
            <person name="Mizushima-Sugano J."/>
            <person name="Satoh T."/>
            <person name="Shirai Y."/>
            <person name="Takahashi Y."/>
            <person name="Nakagawa K."/>
            <person name="Okumura K."/>
            <person name="Nagase T."/>
            <person name="Nomura N."/>
            <person name="Kikuchi H."/>
            <person name="Masuho Y."/>
            <person name="Yamashita R."/>
            <person name="Nakai K."/>
            <person name="Yada T."/>
            <person name="Nakamura Y."/>
            <person name="Ohara O."/>
            <person name="Isogai T."/>
            <person name="Sugano S."/>
        </authorList>
    </citation>
    <scope>NUCLEOTIDE SEQUENCE [LARGE SCALE MRNA]</scope>
    <source>
        <tissue>Testis</tissue>
    </source>
</reference>
<reference key="5">
    <citation type="journal article" date="2006" name="Nature">
        <title>The DNA sequence and biological annotation of human chromosome 1.</title>
        <authorList>
            <person name="Gregory S.G."/>
            <person name="Barlow K.F."/>
            <person name="McLay K.E."/>
            <person name="Kaul R."/>
            <person name="Swarbreck D."/>
            <person name="Dunham A."/>
            <person name="Scott C.E."/>
            <person name="Howe K.L."/>
            <person name="Woodfine K."/>
            <person name="Spencer C.C.A."/>
            <person name="Jones M.C."/>
            <person name="Gillson C."/>
            <person name="Searle S."/>
            <person name="Zhou Y."/>
            <person name="Kokocinski F."/>
            <person name="McDonald L."/>
            <person name="Evans R."/>
            <person name="Phillips K."/>
            <person name="Atkinson A."/>
            <person name="Cooper R."/>
            <person name="Jones C."/>
            <person name="Hall R.E."/>
            <person name="Andrews T.D."/>
            <person name="Lloyd C."/>
            <person name="Ainscough R."/>
            <person name="Almeida J.P."/>
            <person name="Ambrose K.D."/>
            <person name="Anderson F."/>
            <person name="Andrew R.W."/>
            <person name="Ashwell R.I.S."/>
            <person name="Aubin K."/>
            <person name="Babbage A.K."/>
            <person name="Bagguley C.L."/>
            <person name="Bailey J."/>
            <person name="Beasley H."/>
            <person name="Bethel G."/>
            <person name="Bird C.P."/>
            <person name="Bray-Allen S."/>
            <person name="Brown J.Y."/>
            <person name="Brown A.J."/>
            <person name="Buckley D."/>
            <person name="Burton J."/>
            <person name="Bye J."/>
            <person name="Carder C."/>
            <person name="Chapman J.C."/>
            <person name="Clark S.Y."/>
            <person name="Clarke G."/>
            <person name="Clee C."/>
            <person name="Cobley V."/>
            <person name="Collier R.E."/>
            <person name="Corby N."/>
            <person name="Coville G.J."/>
            <person name="Davies J."/>
            <person name="Deadman R."/>
            <person name="Dunn M."/>
            <person name="Earthrowl M."/>
            <person name="Ellington A.G."/>
            <person name="Errington H."/>
            <person name="Frankish A."/>
            <person name="Frankland J."/>
            <person name="French L."/>
            <person name="Garner P."/>
            <person name="Garnett J."/>
            <person name="Gay L."/>
            <person name="Ghori M.R.J."/>
            <person name="Gibson R."/>
            <person name="Gilby L.M."/>
            <person name="Gillett W."/>
            <person name="Glithero R.J."/>
            <person name="Grafham D.V."/>
            <person name="Griffiths C."/>
            <person name="Griffiths-Jones S."/>
            <person name="Grocock R."/>
            <person name="Hammond S."/>
            <person name="Harrison E.S.I."/>
            <person name="Hart E."/>
            <person name="Haugen E."/>
            <person name="Heath P.D."/>
            <person name="Holmes S."/>
            <person name="Holt K."/>
            <person name="Howden P.J."/>
            <person name="Hunt A.R."/>
            <person name="Hunt S.E."/>
            <person name="Hunter G."/>
            <person name="Isherwood J."/>
            <person name="James R."/>
            <person name="Johnson C."/>
            <person name="Johnson D."/>
            <person name="Joy A."/>
            <person name="Kay M."/>
            <person name="Kershaw J.K."/>
            <person name="Kibukawa M."/>
            <person name="Kimberley A.M."/>
            <person name="King A."/>
            <person name="Knights A.J."/>
            <person name="Lad H."/>
            <person name="Laird G."/>
            <person name="Lawlor S."/>
            <person name="Leongamornlert D.A."/>
            <person name="Lloyd D.M."/>
            <person name="Loveland J."/>
            <person name="Lovell J."/>
            <person name="Lush M.J."/>
            <person name="Lyne R."/>
            <person name="Martin S."/>
            <person name="Mashreghi-Mohammadi M."/>
            <person name="Matthews L."/>
            <person name="Matthews N.S.W."/>
            <person name="McLaren S."/>
            <person name="Milne S."/>
            <person name="Mistry S."/>
            <person name="Moore M.J.F."/>
            <person name="Nickerson T."/>
            <person name="O'Dell C.N."/>
            <person name="Oliver K."/>
            <person name="Palmeiri A."/>
            <person name="Palmer S.A."/>
            <person name="Parker A."/>
            <person name="Patel D."/>
            <person name="Pearce A.V."/>
            <person name="Peck A.I."/>
            <person name="Pelan S."/>
            <person name="Phelps K."/>
            <person name="Phillimore B.J."/>
            <person name="Plumb R."/>
            <person name="Rajan J."/>
            <person name="Raymond C."/>
            <person name="Rouse G."/>
            <person name="Saenphimmachak C."/>
            <person name="Sehra H.K."/>
            <person name="Sheridan E."/>
            <person name="Shownkeen R."/>
            <person name="Sims S."/>
            <person name="Skuce C.D."/>
            <person name="Smith M."/>
            <person name="Steward C."/>
            <person name="Subramanian S."/>
            <person name="Sycamore N."/>
            <person name="Tracey A."/>
            <person name="Tromans A."/>
            <person name="Van Helmond Z."/>
            <person name="Wall M."/>
            <person name="Wallis J.M."/>
            <person name="White S."/>
            <person name="Whitehead S.L."/>
            <person name="Wilkinson J.E."/>
            <person name="Willey D.L."/>
            <person name="Williams H."/>
            <person name="Wilming L."/>
            <person name="Wray P.W."/>
            <person name="Wu Z."/>
            <person name="Coulson A."/>
            <person name="Vaudin M."/>
            <person name="Sulston J.E."/>
            <person name="Durbin R.M."/>
            <person name="Hubbard T."/>
            <person name="Wooster R."/>
            <person name="Dunham I."/>
            <person name="Carter N.P."/>
            <person name="McVean G."/>
            <person name="Ross M.T."/>
            <person name="Harrow J."/>
            <person name="Olson M.V."/>
            <person name="Beck S."/>
            <person name="Rogers J."/>
            <person name="Bentley D.R."/>
        </authorList>
    </citation>
    <scope>NUCLEOTIDE SEQUENCE [LARGE SCALE GENOMIC DNA]</scope>
</reference>
<reference key="6">
    <citation type="submission" date="2005-09" db="EMBL/GenBank/DDBJ databases">
        <authorList>
            <person name="Mural R.J."/>
            <person name="Istrail S."/>
            <person name="Sutton G.G."/>
            <person name="Florea L."/>
            <person name="Halpern A.L."/>
            <person name="Mobarry C.M."/>
            <person name="Lippert R."/>
            <person name="Walenz B."/>
            <person name="Shatkay H."/>
            <person name="Dew I."/>
            <person name="Miller J.R."/>
            <person name="Flanigan M.J."/>
            <person name="Edwards N.J."/>
            <person name="Bolanos R."/>
            <person name="Fasulo D."/>
            <person name="Halldorsson B.V."/>
            <person name="Hannenhalli S."/>
            <person name="Turner R."/>
            <person name="Yooseph S."/>
            <person name="Lu F."/>
            <person name="Nusskern D.R."/>
            <person name="Shue B.C."/>
            <person name="Zheng X.H."/>
            <person name="Zhong F."/>
            <person name="Delcher A.L."/>
            <person name="Huson D.H."/>
            <person name="Kravitz S.A."/>
            <person name="Mouchard L."/>
            <person name="Reinert K."/>
            <person name="Remington K.A."/>
            <person name="Clark A.G."/>
            <person name="Waterman M.S."/>
            <person name="Eichler E.E."/>
            <person name="Adams M.D."/>
            <person name="Hunkapiller M.W."/>
            <person name="Myers E.W."/>
            <person name="Venter J.C."/>
        </authorList>
    </citation>
    <scope>NUCLEOTIDE SEQUENCE [LARGE SCALE GENOMIC DNA]</scope>
</reference>
<reference key="7">
    <citation type="journal article" date="2004" name="Genome Res.">
        <title>The status, quality, and expansion of the NIH full-length cDNA project: the Mammalian Gene Collection (MGC).</title>
        <authorList>
            <consortium name="The MGC Project Team"/>
        </authorList>
    </citation>
    <scope>NUCLEOTIDE SEQUENCE [LARGE SCALE MRNA]</scope>
    <source>
        <tissue>Colon</tissue>
    </source>
</reference>
<reference key="8">
    <citation type="journal article" date="2009" name="Protein Pept. Lett.">
        <title>Glycosylation of tetraspanin Tspan-1 at four distinct sites promotes its transition through the endoplasmic reticulum.</title>
        <authorList>
            <person name="Scholz C.-J."/>
            <person name="Sauer G."/>
            <person name="Deissler H."/>
        </authorList>
    </citation>
    <scope>SUBCELLULAR LOCATION</scope>
    <scope>GLYCOSYLATION AT ASN-141; ASN-154; ASN-178 AND ASN-184</scope>
    <scope>MUTAGENESIS OF ASN-141; ASN-154; ASN-178 AND ASN-184</scope>
</reference>
<reference key="9">
    <citation type="journal article" date="2011" name="Am. J. Physiol.">
        <title>Tspan-1 interacts with the thiamine transporter-1 in human intestinal epithelial cells and modulates its stability.</title>
        <authorList>
            <person name="Nabokina S.M."/>
            <person name="Senthilkumar S.R."/>
            <person name="Said H.M."/>
        </authorList>
    </citation>
    <scope>FUNCTION</scope>
    <scope>INTERACTION WITH SLC19A2</scope>
    <scope>SUBCELLULAR LOCATION</scope>
</reference>
<reference key="10">
    <citation type="journal article" date="2018" name="Mol. Med. Report.">
        <title>Silencing Tspan1 inhibits migration and invasion, and induces the apoptosis of human pancreatic cancer cells.</title>
        <authorList>
            <person name="Tian J."/>
            <person name="Zhang R."/>
            <person name="Piao H."/>
            <person name="Li X."/>
            <person name="Sheng W."/>
            <person name="Zhou J."/>
            <person name="Dong M."/>
            <person name="Zhang X."/>
            <person name="Yan X."/>
            <person name="Shang W."/>
            <person name="Zhao J."/>
            <person name="Xu L."/>
            <person name="Liu F."/>
            <person name="Shi G."/>
        </authorList>
    </citation>
    <scope>FUNCTION</scope>
</reference>
<reference key="11">
    <citation type="journal article" date="2018" name="Inflamm. Res.">
        <title>Tetraspanin 1 inhibits TNFalpha-induced apoptosis via NF-kappaB signaling pathway in alveolar epithelial cells.</title>
        <authorList>
            <person name="Yang L."/>
            <person name="Wang Y."/>
            <person name="Pan Z."/>
            <person name="Gao S."/>
            <person name="Zou B."/>
            <person name="Lin Z."/>
            <person name="Feng D."/>
            <person name="HuangFu C."/>
            <person name="Liu G."/>
        </authorList>
    </citation>
    <scope>FUNCTION</scope>
    <scope>SUBCELLULAR LOCATION</scope>
</reference>
<organism>
    <name type="scientific">Homo sapiens</name>
    <name type="common">Human</name>
    <dbReference type="NCBI Taxonomy" id="9606"/>
    <lineage>
        <taxon>Eukaryota</taxon>
        <taxon>Metazoa</taxon>
        <taxon>Chordata</taxon>
        <taxon>Craniata</taxon>
        <taxon>Vertebrata</taxon>
        <taxon>Euteleostomi</taxon>
        <taxon>Mammalia</taxon>
        <taxon>Eutheria</taxon>
        <taxon>Euarchontoglires</taxon>
        <taxon>Primates</taxon>
        <taxon>Haplorrhini</taxon>
        <taxon>Catarrhini</taxon>
        <taxon>Hominidae</taxon>
        <taxon>Homo</taxon>
    </lineage>
</organism>
<proteinExistence type="evidence at protein level"/>
<name>TSN1_HUMAN</name>
<comment type="function">
    <text evidence="1 4 5 6">Structural component of specialized membrane microdomains known as tetraspanin-enriched microdomains (TERMs), which act as platforms for receptor clustering and signaling. Participates thereby in diverse biological functions such as cell signal transduction, adhesion, migration and protein trafficking (PubMed:30066932, PubMed:30291375). Regulates neuronal differentiation in response to NGF by facilitating NGF-mediated activation of NTRK1/TRKA receptor tyrosine kinase and subsequent downstream signaling pathways (By similarity). Plays a role in the inhibition of TNFalpha-induced apoptosis. Mechanistically, inhibits the NF-kappa-B signaling pathway by blocking phosphorylation of CHUK (PubMed:30291375). Also promotes the stability of the thiamine transporter 1/SLC19A2 in intestinal epithelial cells leading to an increase of thiamine uptake process (PubMed:21836059).</text>
</comment>
<comment type="subunit">
    <text evidence="1 4">Interacts with SLC19A2 (PubMed:21836059). Interacts with NTRK1/TRKA (By similarity).</text>
</comment>
<comment type="interaction">
    <interactant intactId="EBI-3914312">
        <id>O60635</id>
    </interactant>
    <interactant intactId="EBI-3941998">
        <id>O60779</id>
        <label>SLC19A2</label>
    </interactant>
    <organismsDiffer>false</organismsDiffer>
    <experiments>5</experiments>
</comment>
<comment type="interaction">
    <interactant intactId="EBI-3914312">
        <id>O60635</id>
    </interactant>
    <interactant intactId="EBI-1049924">
        <id>Q00059</id>
        <label>TFAM</label>
    </interactant>
    <organismsDiffer>false</organismsDiffer>
    <experiments>3</experiments>
</comment>
<comment type="interaction">
    <interactant intactId="EBI-3914312">
        <id>O60635</id>
    </interactant>
    <interactant intactId="EBI-11742770">
        <id>Q96HE8</id>
        <label>TMEM80</label>
    </interactant>
    <organismsDiffer>false</organismsDiffer>
    <experiments>3</experiments>
</comment>
<comment type="subcellular location">
    <subcellularLocation>
        <location evidence="4 6">Cell membrane</location>
        <topology evidence="2">Multi-pass membrane protein</topology>
    </subcellularLocation>
    <subcellularLocation>
        <location evidence="3">Lysosome membrane</location>
        <topology evidence="3">Multi-pass membrane protein</topology>
    </subcellularLocation>
</comment>
<comment type="similarity">
    <text evidence="7">Belongs to the tetraspanin (TM4SF) family.</text>
</comment>
<comment type="online information" name="Atlas of Genetics and Cytogenetics in Oncology and Haematology">
    <link uri="https://atlasgeneticsoncology.org/gene/44178/TSPAN1"/>
</comment>
<feature type="chain" id="PRO_0000219234" description="Tetraspanin-1">
    <location>
        <begin position="1"/>
        <end position="241"/>
    </location>
</feature>
<feature type="topological domain" description="Cytoplasmic" evidence="2">
    <location>
        <begin position="1"/>
        <end position="11"/>
    </location>
</feature>
<feature type="transmembrane region" description="Helical" evidence="2">
    <location>
        <begin position="12"/>
        <end position="32"/>
    </location>
</feature>
<feature type="topological domain" description="Extracellular" evidence="2">
    <location>
        <begin position="33"/>
        <end position="52"/>
    </location>
</feature>
<feature type="transmembrane region" description="Helical" evidence="2">
    <location>
        <begin position="53"/>
        <end position="73"/>
    </location>
</feature>
<feature type="topological domain" description="Cytoplasmic" evidence="2">
    <location>
        <begin position="74"/>
        <end position="88"/>
    </location>
</feature>
<feature type="transmembrane region" description="Helical" evidence="2">
    <location>
        <begin position="89"/>
        <end position="109"/>
    </location>
</feature>
<feature type="topological domain" description="Extracellular" evidence="2">
    <location>
        <begin position="110"/>
        <end position="211"/>
    </location>
</feature>
<feature type="transmembrane region" description="Helical" evidence="2">
    <location>
        <begin position="212"/>
        <end position="232"/>
    </location>
</feature>
<feature type="topological domain" description="Cytoplasmic" evidence="2">
    <location>
        <begin position="233"/>
        <end position="241"/>
    </location>
</feature>
<feature type="glycosylation site" description="N-linked (GlcNAc...) asparagine" evidence="3">
    <location>
        <position position="141"/>
    </location>
</feature>
<feature type="glycosylation site" description="N-linked (GlcNAc...) asparagine" evidence="3">
    <location>
        <position position="154"/>
    </location>
</feature>
<feature type="glycosylation site" description="N-linked (GlcNAc...) asparagine" evidence="3">
    <location>
        <position position="178"/>
    </location>
</feature>
<feature type="glycosylation site" description="N-linked (GlcNAc...) asparagine" evidence="3">
    <location>
        <position position="184"/>
    </location>
</feature>
<feature type="sequence variant" id="VAR_052327" description="In dbSNP:rs2234267.">
    <original>S</original>
    <variation>F</variation>
    <location>
        <position position="38"/>
    </location>
</feature>
<feature type="sequence variant" id="VAR_034573" description="In dbSNP:rs2234268.">
    <original>V</original>
    <variation>M</variation>
    <location>
        <position position="87"/>
    </location>
</feature>
<feature type="mutagenesis site" description="Loss of glycosylation." evidence="3">
    <original>N</original>
    <variation>A</variation>
    <location>
        <position position="141"/>
    </location>
</feature>
<feature type="mutagenesis site" description="Loss of glycosylation." evidence="3">
    <original>N</original>
    <variation>A</variation>
    <location>
        <position position="154"/>
    </location>
</feature>
<feature type="mutagenesis site" description="Loss of glycosylation." evidence="3">
    <original>N</original>
    <variation>A</variation>
    <location>
        <position position="178"/>
    </location>
</feature>
<feature type="mutagenesis site" description="Loss of glycosylation." evidence="3">
    <original>N</original>
    <variation>A</variation>
    <location>
        <position position="184"/>
    </location>
</feature>
<feature type="sequence conflict" description="In Ref. 1; AAC69714." evidence="7" ref="1">
    <original>K</original>
    <variation>E</variation>
    <location>
        <position position="189"/>
    </location>
</feature>
<keyword id="KW-1003">Cell membrane</keyword>
<keyword id="KW-0325">Glycoprotein</keyword>
<keyword id="KW-0458">Lysosome</keyword>
<keyword id="KW-0472">Membrane</keyword>
<keyword id="KW-1267">Proteomics identification</keyword>
<keyword id="KW-1185">Reference proteome</keyword>
<keyword id="KW-0812">Transmembrane</keyword>
<keyword id="KW-1133">Transmembrane helix</keyword>
<protein>
    <recommendedName>
        <fullName>Tetraspanin-1</fullName>
        <shortName>Tspan-1</shortName>
    </recommendedName>
    <alternativeName>
        <fullName>Tetraspan NET-1</fullName>
    </alternativeName>
    <alternativeName>
        <fullName>Tetraspanin TM4-C</fullName>
    </alternativeName>
</protein>
<dbReference type="EMBL" id="AF054838">
    <property type="protein sequence ID" value="AAC69714.1"/>
    <property type="molecule type" value="mRNA"/>
</dbReference>
<dbReference type="EMBL" id="AF065388">
    <property type="protein sequence ID" value="AAC17119.1"/>
    <property type="molecule type" value="mRNA"/>
</dbReference>
<dbReference type="EMBL" id="AF133425">
    <property type="protein sequence ID" value="AAF08364.1"/>
    <property type="molecule type" value="mRNA"/>
</dbReference>
<dbReference type="EMBL" id="AK313774">
    <property type="protein sequence ID" value="BAG36512.1"/>
    <property type="molecule type" value="mRNA"/>
</dbReference>
<dbReference type="EMBL" id="AL672043">
    <property type="status" value="NOT_ANNOTATED_CDS"/>
    <property type="molecule type" value="Genomic_DNA"/>
</dbReference>
<dbReference type="EMBL" id="CH471059">
    <property type="protein sequence ID" value="EAX06938.1"/>
    <property type="molecule type" value="Genomic_DNA"/>
</dbReference>
<dbReference type="EMBL" id="CH471059">
    <property type="protein sequence ID" value="EAX06939.1"/>
    <property type="molecule type" value="Genomic_DNA"/>
</dbReference>
<dbReference type="EMBL" id="CH471059">
    <property type="protein sequence ID" value="EAX06940.1"/>
    <property type="molecule type" value="Genomic_DNA"/>
</dbReference>
<dbReference type="EMBL" id="BC007290">
    <property type="protein sequence ID" value="AAH07290.1"/>
    <property type="molecule type" value="mRNA"/>
</dbReference>
<dbReference type="EMBL" id="BC013404">
    <property type="protein sequence ID" value="AAH13404.1"/>
    <property type="molecule type" value="mRNA"/>
</dbReference>
<dbReference type="CCDS" id="CCDS530.1"/>
<dbReference type="PIR" id="A59262">
    <property type="entry name" value="A59262"/>
</dbReference>
<dbReference type="RefSeq" id="NP_005718.2">
    <property type="nucleotide sequence ID" value="NM_005727.3"/>
</dbReference>
<dbReference type="SMR" id="O60635"/>
<dbReference type="BioGRID" id="115410">
    <property type="interactions" value="40"/>
</dbReference>
<dbReference type="FunCoup" id="O60635">
    <property type="interactions" value="118"/>
</dbReference>
<dbReference type="IntAct" id="O60635">
    <property type="interactions" value="18"/>
</dbReference>
<dbReference type="STRING" id="9606.ENSP00000361072"/>
<dbReference type="GlyConnect" id="1797">
    <property type="glycosylation" value="9 N-Linked glycans (2 sites)"/>
</dbReference>
<dbReference type="GlyCosmos" id="O60635">
    <property type="glycosylation" value="4 sites, 10 glycans"/>
</dbReference>
<dbReference type="GlyGen" id="O60635">
    <property type="glycosylation" value="5 sites, 73 N-linked glycans (4 sites)"/>
</dbReference>
<dbReference type="iPTMnet" id="O60635"/>
<dbReference type="PhosphoSitePlus" id="O60635"/>
<dbReference type="SwissPalm" id="O60635"/>
<dbReference type="BioMuta" id="TSPAN1"/>
<dbReference type="jPOST" id="O60635"/>
<dbReference type="MassIVE" id="O60635"/>
<dbReference type="PaxDb" id="9606-ENSP00000361072"/>
<dbReference type="PeptideAtlas" id="O60635"/>
<dbReference type="ProteomicsDB" id="49488"/>
<dbReference type="Antibodypedia" id="32752">
    <property type="antibodies" value="271 antibodies from 31 providers"/>
</dbReference>
<dbReference type="DNASU" id="10103"/>
<dbReference type="Ensembl" id="ENST00000372003.6">
    <property type="protein sequence ID" value="ENSP00000361072.1"/>
    <property type="gene ID" value="ENSG00000117472.10"/>
</dbReference>
<dbReference type="GeneID" id="10103"/>
<dbReference type="KEGG" id="hsa:10103"/>
<dbReference type="MANE-Select" id="ENST00000372003.6">
    <property type="protein sequence ID" value="ENSP00000361072.1"/>
    <property type="RefSeq nucleotide sequence ID" value="NM_005727.4"/>
    <property type="RefSeq protein sequence ID" value="NP_005718.2"/>
</dbReference>
<dbReference type="UCSC" id="uc001cpd.4">
    <property type="organism name" value="human"/>
</dbReference>
<dbReference type="AGR" id="HGNC:20657"/>
<dbReference type="CTD" id="10103"/>
<dbReference type="DisGeNET" id="10103"/>
<dbReference type="GeneCards" id="TSPAN1"/>
<dbReference type="HGNC" id="HGNC:20657">
    <property type="gene designation" value="TSPAN1"/>
</dbReference>
<dbReference type="HPA" id="ENSG00000117472">
    <property type="expression patterns" value="Tissue enhanced (intestine, kidney)"/>
</dbReference>
<dbReference type="MalaCards" id="TSPAN1"/>
<dbReference type="MIM" id="613170">
    <property type="type" value="gene"/>
</dbReference>
<dbReference type="neXtProt" id="NX_O60635"/>
<dbReference type="OpenTargets" id="ENSG00000117472"/>
<dbReference type="PharmGKB" id="PA134938100"/>
<dbReference type="VEuPathDB" id="HostDB:ENSG00000117472"/>
<dbReference type="eggNOG" id="KOG3882">
    <property type="taxonomic scope" value="Eukaryota"/>
</dbReference>
<dbReference type="GeneTree" id="ENSGT00940000158851"/>
<dbReference type="HOGENOM" id="CLU_055524_4_1_1"/>
<dbReference type="InParanoid" id="O60635"/>
<dbReference type="OMA" id="CYGAHTE"/>
<dbReference type="OrthoDB" id="6134317at2759"/>
<dbReference type="PAN-GO" id="O60635">
    <property type="GO annotations" value="1 GO annotation based on evolutionary models"/>
</dbReference>
<dbReference type="PhylomeDB" id="O60635"/>
<dbReference type="TreeFam" id="TF352892"/>
<dbReference type="PathwayCommons" id="O60635"/>
<dbReference type="SignaLink" id="O60635"/>
<dbReference type="BioGRID-ORCS" id="10103">
    <property type="hits" value="14 hits in 1147 CRISPR screens"/>
</dbReference>
<dbReference type="ChiTaRS" id="TSPAN1">
    <property type="organism name" value="human"/>
</dbReference>
<dbReference type="GenomeRNAi" id="10103"/>
<dbReference type="Pharos" id="O60635">
    <property type="development level" value="Tbio"/>
</dbReference>
<dbReference type="PRO" id="PR:O60635"/>
<dbReference type="Proteomes" id="UP000005640">
    <property type="component" value="Chromosome 1"/>
</dbReference>
<dbReference type="RNAct" id="O60635">
    <property type="molecule type" value="protein"/>
</dbReference>
<dbReference type="Bgee" id="ENSG00000117472">
    <property type="expression patterns" value="Expressed in bronchial epithelial cell and 130 other cell types or tissues"/>
</dbReference>
<dbReference type="GO" id="GO:0030054">
    <property type="term" value="C:cell junction"/>
    <property type="evidence" value="ECO:0000314"/>
    <property type="project" value="HPA"/>
</dbReference>
<dbReference type="GO" id="GO:0005737">
    <property type="term" value="C:cytoplasm"/>
    <property type="evidence" value="ECO:0000314"/>
    <property type="project" value="UniProtKB"/>
</dbReference>
<dbReference type="GO" id="GO:0070062">
    <property type="term" value="C:extracellular exosome"/>
    <property type="evidence" value="ECO:0007005"/>
    <property type="project" value="UniProtKB"/>
</dbReference>
<dbReference type="GO" id="GO:0043231">
    <property type="term" value="C:intracellular membrane-bounded organelle"/>
    <property type="evidence" value="ECO:0000314"/>
    <property type="project" value="HPA"/>
</dbReference>
<dbReference type="GO" id="GO:0005765">
    <property type="term" value="C:lysosomal membrane"/>
    <property type="evidence" value="ECO:0007669"/>
    <property type="project" value="UniProtKB-SubCell"/>
</dbReference>
<dbReference type="GO" id="GO:0016020">
    <property type="term" value="C:membrane"/>
    <property type="evidence" value="ECO:0000314"/>
    <property type="project" value="UniProtKB"/>
</dbReference>
<dbReference type="GO" id="GO:0005654">
    <property type="term" value="C:nucleoplasm"/>
    <property type="evidence" value="ECO:0000314"/>
    <property type="project" value="HPA"/>
</dbReference>
<dbReference type="GO" id="GO:0048471">
    <property type="term" value="C:perinuclear region of cytoplasm"/>
    <property type="evidence" value="ECO:0000314"/>
    <property type="project" value="UniProtKB"/>
</dbReference>
<dbReference type="GO" id="GO:0005886">
    <property type="term" value="C:plasma membrane"/>
    <property type="evidence" value="ECO:0000314"/>
    <property type="project" value="UniProtKB"/>
</dbReference>
<dbReference type="GO" id="GO:0031982">
    <property type="term" value="C:vesicle"/>
    <property type="evidence" value="ECO:0000314"/>
    <property type="project" value="UniProtKB"/>
</dbReference>
<dbReference type="GO" id="GO:0050821">
    <property type="term" value="P:protein stabilization"/>
    <property type="evidence" value="ECO:0000314"/>
    <property type="project" value="UniProtKB"/>
</dbReference>
<dbReference type="CDD" id="cd03156">
    <property type="entry name" value="uroplakin_I_like_LEL"/>
    <property type="match status" value="1"/>
</dbReference>
<dbReference type="FunFam" id="1.10.1450.10:FF:000020">
    <property type="entry name" value="Tetraspanin"/>
    <property type="match status" value="1"/>
</dbReference>
<dbReference type="Gene3D" id="1.10.1450.10">
    <property type="entry name" value="Tetraspanin"/>
    <property type="match status" value="1"/>
</dbReference>
<dbReference type="InterPro" id="IPR018499">
    <property type="entry name" value="Tetraspanin/Peripherin"/>
</dbReference>
<dbReference type="InterPro" id="IPR000301">
    <property type="entry name" value="Tetraspanin_animals"/>
</dbReference>
<dbReference type="InterPro" id="IPR018503">
    <property type="entry name" value="Tetraspanin_CS"/>
</dbReference>
<dbReference type="InterPro" id="IPR008952">
    <property type="entry name" value="Tetraspanin_EC2_sf"/>
</dbReference>
<dbReference type="PANTHER" id="PTHR19282">
    <property type="entry name" value="TETRASPANIN"/>
    <property type="match status" value="1"/>
</dbReference>
<dbReference type="PANTHER" id="PTHR19282:SF216">
    <property type="entry name" value="TETRASPANIN-1"/>
    <property type="match status" value="1"/>
</dbReference>
<dbReference type="Pfam" id="PF00335">
    <property type="entry name" value="Tetraspanin"/>
    <property type="match status" value="1"/>
</dbReference>
<dbReference type="PIRSF" id="PIRSF002419">
    <property type="entry name" value="Tetraspanin"/>
    <property type="match status" value="1"/>
</dbReference>
<dbReference type="PRINTS" id="PR00259">
    <property type="entry name" value="TMFOUR"/>
</dbReference>
<dbReference type="SUPFAM" id="SSF48652">
    <property type="entry name" value="Tetraspanin"/>
    <property type="match status" value="1"/>
</dbReference>
<dbReference type="PROSITE" id="PS00421">
    <property type="entry name" value="TM4_1"/>
    <property type="match status" value="1"/>
</dbReference>
<evidence type="ECO:0000250" key="1">
    <source>
        <dbReference type="UniProtKB" id="Q6AYR9"/>
    </source>
</evidence>
<evidence type="ECO:0000255" key="2"/>
<evidence type="ECO:0000269" key="3">
    <source>
    </source>
</evidence>
<evidence type="ECO:0000269" key="4">
    <source>
    </source>
</evidence>
<evidence type="ECO:0000269" key="5">
    <source>
    </source>
</evidence>
<evidence type="ECO:0000269" key="6">
    <source>
    </source>
</evidence>
<evidence type="ECO:0000305" key="7"/>
<accession>O60635</accession>
<accession>D3DQ14</accession>
<accession>O60745</accession>
<accession>Q5VST0</accession>
<sequence length="241" mass="26301">MQCFSFIKTMMILFNLLIFLCGAALLAVGIWVSIDGASFLKIFGPLSSSAMQFVNVGYFLIAAGVVVFALGFLGCYGAKTESKCALVTFFFILLLIFIAEVAAAVVALVYTTMAEHFLTLLVVPAIKKDYGSQEDFTQVWNTTMKGLKCCGFTNYTDFEDSPYFKENSAFPPFCCNDNVTNTANETCTKQKAHDQKVEGCFNQLLYDIRTNAVTVGGVAAGIGGLELAAMIVSMYLYCNLQ</sequence>
<gene>
    <name type="primary">TSPAN1</name>
</gene>